<proteinExistence type="inferred from homology"/>
<reference key="1">
    <citation type="journal article" date="2002" name="J. Mol. Microbiol. Biotechnol.">
        <title>The genome of Methanosarcina mazei: evidence for lateral gene transfer between Bacteria and Archaea.</title>
        <authorList>
            <person name="Deppenmeier U."/>
            <person name="Johann A."/>
            <person name="Hartsch T."/>
            <person name="Merkl R."/>
            <person name="Schmitz R.A."/>
            <person name="Martinez-Arias R."/>
            <person name="Henne A."/>
            <person name="Wiezer A."/>
            <person name="Baeumer S."/>
            <person name="Jacobi C."/>
            <person name="Brueggemann H."/>
            <person name="Lienard T."/>
            <person name="Christmann A."/>
            <person name="Boemecke M."/>
            <person name="Steckel S."/>
            <person name="Bhattacharyya A."/>
            <person name="Lykidis A."/>
            <person name="Overbeek R."/>
            <person name="Klenk H.-P."/>
            <person name="Gunsalus R.P."/>
            <person name="Fritz H.-J."/>
            <person name="Gottschalk G."/>
        </authorList>
    </citation>
    <scope>NUCLEOTIDE SEQUENCE [LARGE SCALE GENOMIC DNA]</scope>
    <source>
        <strain>ATCC BAA-159 / DSM 3647 / Goe1 / Go1 / JCM 11833 / OCM 88</strain>
    </source>
</reference>
<gene>
    <name evidence="1" type="primary">fni</name>
    <name type="ordered locus">MM_1764</name>
</gene>
<name>IDI2_METMA</name>
<comment type="function">
    <text evidence="1">Involved in the biosynthesis of isoprenoids. Catalyzes the 1,3-allylic rearrangement of the homoallylic substrate isopentenyl (IPP) to its allylic isomer, dimethylallyl diphosphate (DMAPP).</text>
</comment>
<comment type="catalytic activity">
    <reaction evidence="1">
        <text>isopentenyl diphosphate = dimethylallyl diphosphate</text>
        <dbReference type="Rhea" id="RHEA:23284"/>
        <dbReference type="ChEBI" id="CHEBI:57623"/>
        <dbReference type="ChEBI" id="CHEBI:128769"/>
        <dbReference type="EC" id="5.3.3.2"/>
    </reaction>
</comment>
<comment type="cofactor">
    <cofactor evidence="1">
        <name>FMN</name>
        <dbReference type="ChEBI" id="CHEBI:58210"/>
    </cofactor>
</comment>
<comment type="cofactor">
    <cofactor evidence="1">
        <name>NADPH</name>
        <dbReference type="ChEBI" id="CHEBI:57783"/>
    </cofactor>
</comment>
<comment type="cofactor">
    <cofactor evidence="1">
        <name>Mg(2+)</name>
        <dbReference type="ChEBI" id="CHEBI:18420"/>
    </cofactor>
</comment>
<comment type="subunit">
    <text evidence="1">Homooctamer. Dimer of tetramers.</text>
</comment>
<comment type="subcellular location">
    <subcellularLocation>
        <location evidence="1">Cytoplasm</location>
    </subcellularLocation>
</comment>
<comment type="similarity">
    <text evidence="1">Belongs to the IPP isomerase type 2 family.</text>
</comment>
<accession>Q8PW37</accession>
<feature type="chain" id="PRO_0000134446" description="Isopentenyl-diphosphate delta-isomerase">
    <location>
        <begin position="1"/>
        <end position="365"/>
    </location>
</feature>
<feature type="binding site" evidence="1">
    <location>
        <begin position="8"/>
        <end position="9"/>
    </location>
    <ligand>
        <name>substrate</name>
    </ligand>
</feature>
<feature type="binding site" evidence="1">
    <location>
        <begin position="67"/>
        <end position="69"/>
    </location>
    <ligand>
        <name>FMN</name>
        <dbReference type="ChEBI" id="CHEBI:58210"/>
    </ligand>
</feature>
<feature type="binding site" evidence="1">
    <location>
        <begin position="97"/>
        <end position="99"/>
    </location>
    <ligand>
        <name>substrate</name>
    </ligand>
</feature>
<feature type="binding site" evidence="1">
    <location>
        <position position="97"/>
    </location>
    <ligand>
        <name>FMN</name>
        <dbReference type="ChEBI" id="CHEBI:58210"/>
    </ligand>
</feature>
<feature type="binding site" evidence="1">
    <location>
        <position position="126"/>
    </location>
    <ligand>
        <name>FMN</name>
        <dbReference type="ChEBI" id="CHEBI:58210"/>
    </ligand>
</feature>
<feature type="binding site" evidence="1">
    <location>
        <position position="160"/>
    </location>
    <ligand>
        <name>substrate</name>
    </ligand>
</feature>
<feature type="binding site" evidence="1">
    <location>
        <position position="161"/>
    </location>
    <ligand>
        <name>Mg(2+)</name>
        <dbReference type="ChEBI" id="CHEBI:18420"/>
    </ligand>
</feature>
<feature type="binding site" evidence="1">
    <location>
        <position position="192"/>
    </location>
    <ligand>
        <name>FMN</name>
        <dbReference type="ChEBI" id="CHEBI:58210"/>
    </ligand>
</feature>
<feature type="binding site" evidence="1">
    <location>
        <position position="222"/>
    </location>
    <ligand>
        <name>FMN</name>
        <dbReference type="ChEBI" id="CHEBI:58210"/>
    </ligand>
</feature>
<feature type="binding site" evidence="1">
    <location>
        <begin position="272"/>
        <end position="274"/>
    </location>
    <ligand>
        <name>FMN</name>
        <dbReference type="ChEBI" id="CHEBI:58210"/>
    </ligand>
</feature>
<feature type="binding site" evidence="1">
    <location>
        <begin position="293"/>
        <end position="294"/>
    </location>
    <ligand>
        <name>FMN</name>
        <dbReference type="ChEBI" id="CHEBI:58210"/>
    </ligand>
</feature>
<sequence>MINTTSRRKIEHLKLCAESPVEARQVSAGFEDVTLIHRALPELNMDELDLSVDFLGKRIKAPFLIASITGGHPDTIPVNAALAAAAEELGVGIGVGSQRAAIDDPSQEDSFRVVRDEAPDAFVYGNVGAAQIRQYGVEGVEKLIEMIDADALAIHLNFLQEAVQPEGDRDATGCLDMITEICSQIKTPVIVKETGAGISREDAILFQKAGVSAIDVGGAGGTSWAGVEVYRAKESRDSVSERLGELFWDFGIPTVASLIESRVSLPLIATGGIRNGLDIAKSIALGASAASAALPFVGPSLEGKESVVRVLSCMLEEFKAAMFLCGCGNIKDLHNSPVVVTGWTREYLEQRGFNVKDLSLPGNAL</sequence>
<protein>
    <recommendedName>
        <fullName evidence="1">Isopentenyl-diphosphate delta-isomerase</fullName>
        <shortName evidence="1">IPP isomerase</shortName>
        <ecNumber evidence="1">5.3.3.2</ecNumber>
    </recommendedName>
    <alternativeName>
        <fullName evidence="1">Isopentenyl diphosphate:dimethylallyl diphosphate isomerase</fullName>
    </alternativeName>
    <alternativeName>
        <fullName evidence="1">Isopentenyl pyrophosphate isomerase</fullName>
    </alternativeName>
    <alternativeName>
        <fullName evidence="1">Type 2 isopentenyl diphosphate isomerase</fullName>
        <shortName evidence="1">IDI-2</shortName>
    </alternativeName>
</protein>
<organism>
    <name type="scientific">Methanosarcina mazei (strain ATCC BAA-159 / DSM 3647 / Goe1 / Go1 / JCM 11833 / OCM 88)</name>
    <name type="common">Methanosarcina frisia</name>
    <dbReference type="NCBI Taxonomy" id="192952"/>
    <lineage>
        <taxon>Archaea</taxon>
        <taxon>Methanobacteriati</taxon>
        <taxon>Methanobacteriota</taxon>
        <taxon>Stenosarchaea group</taxon>
        <taxon>Methanomicrobia</taxon>
        <taxon>Methanosarcinales</taxon>
        <taxon>Methanosarcinaceae</taxon>
        <taxon>Methanosarcina</taxon>
    </lineage>
</organism>
<dbReference type="EC" id="5.3.3.2" evidence="1"/>
<dbReference type="EMBL" id="AE008384">
    <property type="protein sequence ID" value="AAM31460.1"/>
    <property type="molecule type" value="Genomic_DNA"/>
</dbReference>
<dbReference type="RefSeq" id="WP_011033704.1">
    <property type="nucleotide sequence ID" value="NC_003901.1"/>
</dbReference>
<dbReference type="SMR" id="Q8PW37"/>
<dbReference type="GeneID" id="82160816"/>
<dbReference type="KEGG" id="mma:MM_1764"/>
<dbReference type="PATRIC" id="fig|192952.21.peg.2040"/>
<dbReference type="eggNOG" id="arCOG00613">
    <property type="taxonomic scope" value="Archaea"/>
</dbReference>
<dbReference type="HOGENOM" id="CLU_065515_1_0_2"/>
<dbReference type="Proteomes" id="UP000000595">
    <property type="component" value="Chromosome"/>
</dbReference>
<dbReference type="GO" id="GO:0005737">
    <property type="term" value="C:cytoplasm"/>
    <property type="evidence" value="ECO:0007669"/>
    <property type="project" value="UniProtKB-SubCell"/>
</dbReference>
<dbReference type="GO" id="GO:0010181">
    <property type="term" value="F:FMN binding"/>
    <property type="evidence" value="ECO:0007669"/>
    <property type="project" value="UniProtKB-UniRule"/>
</dbReference>
<dbReference type="GO" id="GO:0004452">
    <property type="term" value="F:isopentenyl-diphosphate delta-isomerase activity"/>
    <property type="evidence" value="ECO:0007669"/>
    <property type="project" value="UniProtKB-UniRule"/>
</dbReference>
<dbReference type="GO" id="GO:0000287">
    <property type="term" value="F:magnesium ion binding"/>
    <property type="evidence" value="ECO:0007669"/>
    <property type="project" value="UniProtKB-UniRule"/>
</dbReference>
<dbReference type="GO" id="GO:0070402">
    <property type="term" value="F:NADPH binding"/>
    <property type="evidence" value="ECO:0007669"/>
    <property type="project" value="UniProtKB-UniRule"/>
</dbReference>
<dbReference type="GO" id="GO:0016491">
    <property type="term" value="F:oxidoreductase activity"/>
    <property type="evidence" value="ECO:0007669"/>
    <property type="project" value="InterPro"/>
</dbReference>
<dbReference type="GO" id="GO:0008299">
    <property type="term" value="P:isoprenoid biosynthetic process"/>
    <property type="evidence" value="ECO:0007669"/>
    <property type="project" value="UniProtKB-UniRule"/>
</dbReference>
<dbReference type="CDD" id="cd02811">
    <property type="entry name" value="IDI-2_FMN"/>
    <property type="match status" value="1"/>
</dbReference>
<dbReference type="Gene3D" id="3.20.20.70">
    <property type="entry name" value="Aldolase class I"/>
    <property type="match status" value="1"/>
</dbReference>
<dbReference type="HAMAP" id="MF_00354">
    <property type="entry name" value="Idi_2"/>
    <property type="match status" value="1"/>
</dbReference>
<dbReference type="InterPro" id="IPR013785">
    <property type="entry name" value="Aldolase_TIM"/>
</dbReference>
<dbReference type="InterPro" id="IPR000262">
    <property type="entry name" value="FMN-dep_DH"/>
</dbReference>
<dbReference type="InterPro" id="IPR011179">
    <property type="entry name" value="IPdP_isomerase"/>
</dbReference>
<dbReference type="NCBIfam" id="TIGR02151">
    <property type="entry name" value="IPP_isom_2"/>
    <property type="match status" value="1"/>
</dbReference>
<dbReference type="PANTHER" id="PTHR43665">
    <property type="entry name" value="ISOPENTENYL-DIPHOSPHATE DELTA-ISOMERASE"/>
    <property type="match status" value="1"/>
</dbReference>
<dbReference type="PANTHER" id="PTHR43665:SF1">
    <property type="entry name" value="ISOPENTENYL-DIPHOSPHATE DELTA-ISOMERASE"/>
    <property type="match status" value="1"/>
</dbReference>
<dbReference type="Pfam" id="PF01070">
    <property type="entry name" value="FMN_dh"/>
    <property type="match status" value="2"/>
</dbReference>
<dbReference type="PIRSF" id="PIRSF003314">
    <property type="entry name" value="IPP_isomerase"/>
    <property type="match status" value="1"/>
</dbReference>
<dbReference type="SMART" id="SM01240">
    <property type="entry name" value="IMPDH"/>
    <property type="match status" value="1"/>
</dbReference>
<dbReference type="SUPFAM" id="SSF51395">
    <property type="entry name" value="FMN-linked oxidoreductases"/>
    <property type="match status" value="1"/>
</dbReference>
<keyword id="KW-0963">Cytoplasm</keyword>
<keyword id="KW-0285">Flavoprotein</keyword>
<keyword id="KW-0288">FMN</keyword>
<keyword id="KW-0413">Isomerase</keyword>
<keyword id="KW-0414">Isoprene biosynthesis</keyword>
<keyword id="KW-0460">Magnesium</keyword>
<keyword id="KW-0479">Metal-binding</keyword>
<keyword id="KW-0521">NADP</keyword>
<evidence type="ECO:0000255" key="1">
    <source>
        <dbReference type="HAMAP-Rule" id="MF_00354"/>
    </source>
</evidence>